<sequence>MITTRFAPSPTGFLHVGGVRTALFSWLYAKNNNGKFILRIEDTDLERSTQEAVDAILDGMSWLGLKNDGEIYYQTKRFDRYKEVIQELIADGKAYYCSCSKERLEELREYQQANNLKTGYDGKCRDANYVPQQGESYVVRFKNPQDGVVSWDDAVKGRISISNHELDDMIIQRADGSPTYNFCVVVDDIDMAITHIIRGDDHVNNTPKQINIYKALNANVPVFAHVPMILGPDGAKLSKRHGAVNVMQYREDGYLPQAILNYLVRLGWSHGDQEIFSIEEMIKAFNLEHINASPSRFDFEKLKWLNKHYIKESKFDDIQTEVEYHFAKTGLDISNGPDLKELVAVMAEKVDTLVELAEKSSYFYSDDISYDENAVKKHIKASTGEIFVKLLENFEALDAQQWQDPDVLHNIVSTTAEQCQVGMGKVGMPLRVAITGSGQSPDIGITLKLLGKNKVVARLTKALEELCK</sequence>
<reference key="1">
    <citation type="journal article" date="2007" name="Genome Biol.">
        <title>Comparison of Francisella tularensis genomes reveals evolutionary events associated with the emergence of human pathogenic strains.</title>
        <authorList>
            <person name="Rohmer L."/>
            <person name="Fong C."/>
            <person name="Abmayr S."/>
            <person name="Wasnick M."/>
            <person name="Larson Freeman T.J."/>
            <person name="Radey M."/>
            <person name="Guina T."/>
            <person name="Svensson K."/>
            <person name="Hayden H.S."/>
            <person name="Jacobs M."/>
            <person name="Gallagher L.A."/>
            <person name="Manoil C."/>
            <person name="Ernst R.K."/>
            <person name="Drees B."/>
            <person name="Buckley D."/>
            <person name="Haugen E."/>
            <person name="Bovee D."/>
            <person name="Zhou Y."/>
            <person name="Chang J."/>
            <person name="Levy R."/>
            <person name="Lim R."/>
            <person name="Gillett W."/>
            <person name="Guenthener D."/>
            <person name="Kang A."/>
            <person name="Shaffer S.A."/>
            <person name="Taylor G."/>
            <person name="Chen J."/>
            <person name="Gallis B."/>
            <person name="D'Argenio D.A."/>
            <person name="Forsman M."/>
            <person name="Olson M.V."/>
            <person name="Goodlett D.R."/>
            <person name="Kaul R."/>
            <person name="Miller S.I."/>
            <person name="Brittnacher M.J."/>
        </authorList>
    </citation>
    <scope>NUCLEOTIDE SEQUENCE [LARGE SCALE GENOMIC DNA]</scope>
    <source>
        <strain>U112</strain>
    </source>
</reference>
<keyword id="KW-0030">Aminoacyl-tRNA synthetase</keyword>
<keyword id="KW-0067">ATP-binding</keyword>
<keyword id="KW-0963">Cytoplasm</keyword>
<keyword id="KW-0436">Ligase</keyword>
<keyword id="KW-0479">Metal-binding</keyword>
<keyword id="KW-0547">Nucleotide-binding</keyword>
<keyword id="KW-0648">Protein biosynthesis</keyword>
<keyword id="KW-0862">Zinc</keyword>
<protein>
    <recommendedName>
        <fullName evidence="1">Glutamate--tRNA ligase</fullName>
        <ecNumber evidence="1">6.1.1.17</ecNumber>
    </recommendedName>
    <alternativeName>
        <fullName evidence="1">Glutamyl-tRNA synthetase</fullName>
        <shortName evidence="1">GluRS</shortName>
    </alternativeName>
</protein>
<evidence type="ECO:0000255" key="1">
    <source>
        <dbReference type="HAMAP-Rule" id="MF_00022"/>
    </source>
</evidence>
<accession>A0Q4G6</accession>
<dbReference type="EC" id="6.1.1.17" evidence="1"/>
<dbReference type="EMBL" id="CP000439">
    <property type="protein sequence ID" value="ABK89131.1"/>
    <property type="molecule type" value="Genomic_DNA"/>
</dbReference>
<dbReference type="RefSeq" id="WP_003041472.1">
    <property type="nucleotide sequence ID" value="NC_008601.1"/>
</dbReference>
<dbReference type="SMR" id="A0Q4G6"/>
<dbReference type="KEGG" id="ftn:FTN_0221"/>
<dbReference type="KEGG" id="ftx:AW25_1823"/>
<dbReference type="BioCyc" id="FTUL401614:G1G75-231-MONOMER"/>
<dbReference type="Proteomes" id="UP000000762">
    <property type="component" value="Chromosome"/>
</dbReference>
<dbReference type="GO" id="GO:0005829">
    <property type="term" value="C:cytosol"/>
    <property type="evidence" value="ECO:0007669"/>
    <property type="project" value="TreeGrafter"/>
</dbReference>
<dbReference type="GO" id="GO:0005524">
    <property type="term" value="F:ATP binding"/>
    <property type="evidence" value="ECO:0007669"/>
    <property type="project" value="UniProtKB-UniRule"/>
</dbReference>
<dbReference type="GO" id="GO:0004818">
    <property type="term" value="F:glutamate-tRNA ligase activity"/>
    <property type="evidence" value="ECO:0007669"/>
    <property type="project" value="UniProtKB-UniRule"/>
</dbReference>
<dbReference type="GO" id="GO:0000049">
    <property type="term" value="F:tRNA binding"/>
    <property type="evidence" value="ECO:0007669"/>
    <property type="project" value="InterPro"/>
</dbReference>
<dbReference type="GO" id="GO:0008270">
    <property type="term" value="F:zinc ion binding"/>
    <property type="evidence" value="ECO:0007669"/>
    <property type="project" value="UniProtKB-UniRule"/>
</dbReference>
<dbReference type="GO" id="GO:0006424">
    <property type="term" value="P:glutamyl-tRNA aminoacylation"/>
    <property type="evidence" value="ECO:0007669"/>
    <property type="project" value="UniProtKB-UniRule"/>
</dbReference>
<dbReference type="CDD" id="cd00808">
    <property type="entry name" value="GluRS_core"/>
    <property type="match status" value="1"/>
</dbReference>
<dbReference type="FunFam" id="3.40.50.620:FF:000007">
    <property type="entry name" value="Glutamate--tRNA ligase"/>
    <property type="match status" value="1"/>
</dbReference>
<dbReference type="Gene3D" id="1.10.10.350">
    <property type="match status" value="1"/>
</dbReference>
<dbReference type="Gene3D" id="3.40.50.620">
    <property type="entry name" value="HUPs"/>
    <property type="match status" value="1"/>
</dbReference>
<dbReference type="HAMAP" id="MF_00022">
    <property type="entry name" value="Glu_tRNA_synth_type1"/>
    <property type="match status" value="1"/>
</dbReference>
<dbReference type="InterPro" id="IPR045462">
    <property type="entry name" value="aa-tRNA-synth_I_cd-bd"/>
</dbReference>
<dbReference type="InterPro" id="IPR020751">
    <property type="entry name" value="aa-tRNA-synth_I_codon-bd_sub2"/>
</dbReference>
<dbReference type="InterPro" id="IPR001412">
    <property type="entry name" value="aa-tRNA-synth_I_CS"/>
</dbReference>
<dbReference type="InterPro" id="IPR008925">
    <property type="entry name" value="aa_tRNA-synth_I_cd-bd_sf"/>
</dbReference>
<dbReference type="InterPro" id="IPR004527">
    <property type="entry name" value="Glu-tRNA-ligase_bac/mito"/>
</dbReference>
<dbReference type="InterPro" id="IPR000924">
    <property type="entry name" value="Glu/Gln-tRNA-synth"/>
</dbReference>
<dbReference type="InterPro" id="IPR020058">
    <property type="entry name" value="Glu/Gln-tRNA-synth_Ib_cat-dom"/>
</dbReference>
<dbReference type="InterPro" id="IPR049940">
    <property type="entry name" value="GluQ/Sye"/>
</dbReference>
<dbReference type="InterPro" id="IPR033910">
    <property type="entry name" value="GluRS_core"/>
</dbReference>
<dbReference type="InterPro" id="IPR014729">
    <property type="entry name" value="Rossmann-like_a/b/a_fold"/>
</dbReference>
<dbReference type="NCBIfam" id="TIGR00464">
    <property type="entry name" value="gltX_bact"/>
    <property type="match status" value="1"/>
</dbReference>
<dbReference type="PANTHER" id="PTHR43311">
    <property type="entry name" value="GLUTAMATE--TRNA LIGASE"/>
    <property type="match status" value="1"/>
</dbReference>
<dbReference type="PANTHER" id="PTHR43311:SF2">
    <property type="entry name" value="GLUTAMATE--TRNA LIGASE, MITOCHONDRIAL-RELATED"/>
    <property type="match status" value="1"/>
</dbReference>
<dbReference type="Pfam" id="PF19269">
    <property type="entry name" value="Anticodon_2"/>
    <property type="match status" value="1"/>
</dbReference>
<dbReference type="Pfam" id="PF00749">
    <property type="entry name" value="tRNA-synt_1c"/>
    <property type="match status" value="1"/>
</dbReference>
<dbReference type="PRINTS" id="PR00987">
    <property type="entry name" value="TRNASYNTHGLU"/>
</dbReference>
<dbReference type="SUPFAM" id="SSF48163">
    <property type="entry name" value="An anticodon-binding domain of class I aminoacyl-tRNA synthetases"/>
    <property type="match status" value="1"/>
</dbReference>
<dbReference type="SUPFAM" id="SSF52374">
    <property type="entry name" value="Nucleotidylyl transferase"/>
    <property type="match status" value="1"/>
</dbReference>
<dbReference type="PROSITE" id="PS00178">
    <property type="entry name" value="AA_TRNA_LIGASE_I"/>
    <property type="match status" value="1"/>
</dbReference>
<feature type="chain" id="PRO_1000001903" description="Glutamate--tRNA ligase">
    <location>
        <begin position="1"/>
        <end position="468"/>
    </location>
</feature>
<feature type="short sequence motif" description="'HIGH' region" evidence="1">
    <location>
        <begin position="8"/>
        <end position="18"/>
    </location>
</feature>
<feature type="short sequence motif" description="'KMSKS' region" evidence="1">
    <location>
        <begin position="236"/>
        <end position="240"/>
    </location>
</feature>
<feature type="binding site" evidence="1">
    <location>
        <position position="97"/>
    </location>
    <ligand>
        <name>Zn(2+)</name>
        <dbReference type="ChEBI" id="CHEBI:29105"/>
    </ligand>
</feature>
<feature type="binding site" evidence="1">
    <location>
        <position position="99"/>
    </location>
    <ligand>
        <name>Zn(2+)</name>
        <dbReference type="ChEBI" id="CHEBI:29105"/>
    </ligand>
</feature>
<feature type="binding site" evidence="1">
    <location>
        <position position="124"/>
    </location>
    <ligand>
        <name>Zn(2+)</name>
        <dbReference type="ChEBI" id="CHEBI:29105"/>
    </ligand>
</feature>
<feature type="binding site" evidence="1">
    <location>
        <position position="126"/>
    </location>
    <ligand>
        <name>Zn(2+)</name>
        <dbReference type="ChEBI" id="CHEBI:29105"/>
    </ligand>
</feature>
<feature type="binding site" evidence="1">
    <location>
        <position position="239"/>
    </location>
    <ligand>
        <name>ATP</name>
        <dbReference type="ChEBI" id="CHEBI:30616"/>
    </ligand>
</feature>
<comment type="function">
    <text evidence="1">Catalyzes the attachment of glutamate to tRNA(Glu) in a two-step reaction: glutamate is first activated by ATP to form Glu-AMP and then transferred to the acceptor end of tRNA(Glu).</text>
</comment>
<comment type="catalytic activity">
    <reaction evidence="1">
        <text>tRNA(Glu) + L-glutamate + ATP = L-glutamyl-tRNA(Glu) + AMP + diphosphate</text>
        <dbReference type="Rhea" id="RHEA:23540"/>
        <dbReference type="Rhea" id="RHEA-COMP:9663"/>
        <dbReference type="Rhea" id="RHEA-COMP:9680"/>
        <dbReference type="ChEBI" id="CHEBI:29985"/>
        <dbReference type="ChEBI" id="CHEBI:30616"/>
        <dbReference type="ChEBI" id="CHEBI:33019"/>
        <dbReference type="ChEBI" id="CHEBI:78442"/>
        <dbReference type="ChEBI" id="CHEBI:78520"/>
        <dbReference type="ChEBI" id="CHEBI:456215"/>
        <dbReference type="EC" id="6.1.1.17"/>
    </reaction>
</comment>
<comment type="cofactor">
    <cofactor evidence="1">
        <name>Zn(2+)</name>
        <dbReference type="ChEBI" id="CHEBI:29105"/>
    </cofactor>
    <text evidence="1">Binds 1 zinc ion per subunit.</text>
</comment>
<comment type="subunit">
    <text evidence="1">Monomer.</text>
</comment>
<comment type="subcellular location">
    <subcellularLocation>
        <location evidence="1">Cytoplasm</location>
    </subcellularLocation>
</comment>
<comment type="similarity">
    <text evidence="1">Belongs to the class-I aminoacyl-tRNA synthetase family. Glutamate--tRNA ligase type 1 subfamily.</text>
</comment>
<proteinExistence type="inferred from homology"/>
<organism>
    <name type="scientific">Francisella tularensis subsp. novicida (strain U112)</name>
    <dbReference type="NCBI Taxonomy" id="401614"/>
    <lineage>
        <taxon>Bacteria</taxon>
        <taxon>Pseudomonadati</taxon>
        <taxon>Pseudomonadota</taxon>
        <taxon>Gammaproteobacteria</taxon>
        <taxon>Thiotrichales</taxon>
        <taxon>Francisellaceae</taxon>
        <taxon>Francisella</taxon>
    </lineage>
</organism>
<name>SYE_FRATN</name>
<gene>
    <name evidence="1" type="primary">gltX</name>
    <name type="ordered locus">FTN_0221</name>
</gene>